<accession>A4XL81</accession>
<dbReference type="EC" id="2.1.2.9" evidence="1"/>
<dbReference type="EMBL" id="CP000679">
    <property type="protein sequence ID" value="ABP67666.1"/>
    <property type="molecule type" value="Genomic_DNA"/>
</dbReference>
<dbReference type="SMR" id="A4XL81"/>
<dbReference type="STRING" id="351627.Csac_2081"/>
<dbReference type="KEGG" id="csc:Csac_2081"/>
<dbReference type="eggNOG" id="COG0223">
    <property type="taxonomic scope" value="Bacteria"/>
</dbReference>
<dbReference type="HOGENOM" id="CLU_033347_1_1_9"/>
<dbReference type="Proteomes" id="UP000000256">
    <property type="component" value="Chromosome"/>
</dbReference>
<dbReference type="GO" id="GO:0005829">
    <property type="term" value="C:cytosol"/>
    <property type="evidence" value="ECO:0007669"/>
    <property type="project" value="TreeGrafter"/>
</dbReference>
<dbReference type="GO" id="GO:0004479">
    <property type="term" value="F:methionyl-tRNA formyltransferase activity"/>
    <property type="evidence" value="ECO:0007669"/>
    <property type="project" value="UniProtKB-UniRule"/>
</dbReference>
<dbReference type="CDD" id="cd08646">
    <property type="entry name" value="FMT_core_Met-tRNA-FMT_N"/>
    <property type="match status" value="1"/>
</dbReference>
<dbReference type="CDD" id="cd08704">
    <property type="entry name" value="Met_tRNA_FMT_C"/>
    <property type="match status" value="1"/>
</dbReference>
<dbReference type="FunFam" id="3.40.50.12230:FF:000001">
    <property type="entry name" value="Methionyl-tRNA formyltransferase"/>
    <property type="match status" value="1"/>
</dbReference>
<dbReference type="Gene3D" id="3.40.50.12230">
    <property type="match status" value="1"/>
</dbReference>
<dbReference type="HAMAP" id="MF_00182">
    <property type="entry name" value="Formyl_trans"/>
    <property type="match status" value="1"/>
</dbReference>
<dbReference type="InterPro" id="IPR005794">
    <property type="entry name" value="Fmt"/>
</dbReference>
<dbReference type="InterPro" id="IPR005793">
    <property type="entry name" value="Formyl_trans_C"/>
</dbReference>
<dbReference type="InterPro" id="IPR002376">
    <property type="entry name" value="Formyl_transf_N"/>
</dbReference>
<dbReference type="InterPro" id="IPR036477">
    <property type="entry name" value="Formyl_transf_N_sf"/>
</dbReference>
<dbReference type="InterPro" id="IPR011034">
    <property type="entry name" value="Formyl_transferase-like_C_sf"/>
</dbReference>
<dbReference type="InterPro" id="IPR001555">
    <property type="entry name" value="GART_AS"/>
</dbReference>
<dbReference type="InterPro" id="IPR044135">
    <property type="entry name" value="Met-tRNA-FMT_C"/>
</dbReference>
<dbReference type="InterPro" id="IPR041711">
    <property type="entry name" value="Met-tRNA-FMT_N"/>
</dbReference>
<dbReference type="NCBIfam" id="TIGR00460">
    <property type="entry name" value="fmt"/>
    <property type="match status" value="1"/>
</dbReference>
<dbReference type="PANTHER" id="PTHR11138">
    <property type="entry name" value="METHIONYL-TRNA FORMYLTRANSFERASE"/>
    <property type="match status" value="1"/>
</dbReference>
<dbReference type="PANTHER" id="PTHR11138:SF5">
    <property type="entry name" value="METHIONYL-TRNA FORMYLTRANSFERASE, MITOCHONDRIAL"/>
    <property type="match status" value="1"/>
</dbReference>
<dbReference type="Pfam" id="PF02911">
    <property type="entry name" value="Formyl_trans_C"/>
    <property type="match status" value="1"/>
</dbReference>
<dbReference type="Pfam" id="PF00551">
    <property type="entry name" value="Formyl_trans_N"/>
    <property type="match status" value="1"/>
</dbReference>
<dbReference type="SUPFAM" id="SSF50486">
    <property type="entry name" value="FMT C-terminal domain-like"/>
    <property type="match status" value="1"/>
</dbReference>
<dbReference type="SUPFAM" id="SSF53328">
    <property type="entry name" value="Formyltransferase"/>
    <property type="match status" value="1"/>
</dbReference>
<dbReference type="PROSITE" id="PS00373">
    <property type="entry name" value="GART"/>
    <property type="match status" value="1"/>
</dbReference>
<sequence>MDIVFMGTPDFAANILQKLIEEPQFNIKLVVTQPDKPVGRKQILTPPPVKEFALKFNLNVVQPDRLKGNEEFFEVLKKINPEVIVVVAYGKILPKEILQIPKYGCINVHASLLPEYRGAAPIQRVLMDGKNYTGITIMKMDEGLDTGDILLQEGIEIEQNDDVITLSKKLSELGAKLLIETLKNISNIVPVKQDATKATYAPPIDKKEGQISWDMSAVQIYNRFRALKIWPGIFTIYKGKLLKIHEMEIAKLDNLENVQNGTILGINETGILVKVKDGVIKLKELQLEGGRKMSARDFVNGYKIKKGDILS</sequence>
<keyword id="KW-0648">Protein biosynthesis</keyword>
<keyword id="KW-0808">Transferase</keyword>
<gene>
    <name evidence="1" type="primary">fmt</name>
    <name type="ordered locus">Csac_2081</name>
</gene>
<comment type="function">
    <text evidence="1">Attaches a formyl group to the free amino group of methionyl-tRNA(fMet). The formyl group appears to play a dual role in the initiator identity of N-formylmethionyl-tRNA by promoting its recognition by IF2 and preventing the misappropriation of this tRNA by the elongation apparatus.</text>
</comment>
<comment type="catalytic activity">
    <reaction evidence="1">
        <text>L-methionyl-tRNA(fMet) + (6R)-10-formyltetrahydrofolate = N-formyl-L-methionyl-tRNA(fMet) + (6S)-5,6,7,8-tetrahydrofolate + H(+)</text>
        <dbReference type="Rhea" id="RHEA:24380"/>
        <dbReference type="Rhea" id="RHEA-COMP:9952"/>
        <dbReference type="Rhea" id="RHEA-COMP:9953"/>
        <dbReference type="ChEBI" id="CHEBI:15378"/>
        <dbReference type="ChEBI" id="CHEBI:57453"/>
        <dbReference type="ChEBI" id="CHEBI:78530"/>
        <dbReference type="ChEBI" id="CHEBI:78844"/>
        <dbReference type="ChEBI" id="CHEBI:195366"/>
        <dbReference type="EC" id="2.1.2.9"/>
    </reaction>
</comment>
<comment type="similarity">
    <text evidence="1">Belongs to the Fmt family.</text>
</comment>
<name>FMT_CALS8</name>
<feature type="chain" id="PRO_1000020040" description="Methionyl-tRNA formyltransferase">
    <location>
        <begin position="1"/>
        <end position="311"/>
    </location>
</feature>
<feature type="binding site" evidence="1">
    <location>
        <begin position="111"/>
        <end position="114"/>
    </location>
    <ligand>
        <name>(6S)-5,6,7,8-tetrahydrofolate</name>
        <dbReference type="ChEBI" id="CHEBI:57453"/>
    </ligand>
</feature>
<protein>
    <recommendedName>
        <fullName evidence="1">Methionyl-tRNA formyltransferase</fullName>
        <ecNumber evidence="1">2.1.2.9</ecNumber>
    </recommendedName>
</protein>
<proteinExistence type="inferred from homology"/>
<reference key="1">
    <citation type="submission" date="2007-04" db="EMBL/GenBank/DDBJ databases">
        <title>Genome sequence of the thermophilic hydrogen-producing bacterium Caldicellulosiruptor saccharolyticus DSM 8903.</title>
        <authorList>
            <person name="Copeland A."/>
            <person name="Lucas S."/>
            <person name="Lapidus A."/>
            <person name="Barry K."/>
            <person name="Detter J.C."/>
            <person name="Glavina del Rio T."/>
            <person name="Hammon N."/>
            <person name="Israni S."/>
            <person name="Dalin E."/>
            <person name="Tice H."/>
            <person name="Pitluck S."/>
            <person name="Kiss H."/>
            <person name="Brettin T."/>
            <person name="Bruce D."/>
            <person name="Han C."/>
            <person name="Schmutz J."/>
            <person name="Larimer F."/>
            <person name="Land M."/>
            <person name="Hauser L."/>
            <person name="Kyrpides N."/>
            <person name="Lykidis A."/>
            <person name="van de Werken H.J.G."/>
            <person name="Verhaart M.R.A."/>
            <person name="VanFossen A.L."/>
            <person name="Lewis D.L."/>
            <person name="Nichols J.D."/>
            <person name="Goorissen H.P."/>
            <person name="van Niel E.W.J."/>
            <person name="Stams F.J.M."/>
            <person name="Willquist K.U."/>
            <person name="Ward D.E."/>
            <person name="van der Oost J."/>
            <person name="Kelly R.M."/>
            <person name="Kengen S.M.W."/>
            <person name="Richardson P."/>
        </authorList>
    </citation>
    <scope>NUCLEOTIDE SEQUENCE [LARGE SCALE GENOMIC DNA]</scope>
    <source>
        <strain>ATCC 43494 / DSM 8903 / Tp8T 6331</strain>
    </source>
</reference>
<evidence type="ECO:0000255" key="1">
    <source>
        <dbReference type="HAMAP-Rule" id="MF_00182"/>
    </source>
</evidence>
<organism>
    <name type="scientific">Caldicellulosiruptor saccharolyticus (strain ATCC 43494 / DSM 8903 / Tp8T 6331)</name>
    <dbReference type="NCBI Taxonomy" id="351627"/>
    <lineage>
        <taxon>Bacteria</taxon>
        <taxon>Bacillati</taxon>
        <taxon>Bacillota</taxon>
        <taxon>Bacillota incertae sedis</taxon>
        <taxon>Caldicellulosiruptorales</taxon>
        <taxon>Caldicellulosiruptoraceae</taxon>
        <taxon>Caldicellulosiruptor</taxon>
    </lineage>
</organism>